<feature type="initiator methionine" description="Removed" evidence="8">
    <location>
        <position position="1"/>
    </location>
</feature>
<feature type="chain" id="PRO_0000459237" description="Endolysin PlyC, small cell-wall binding subunit">
    <location>
        <begin position="2"/>
        <end position="72"/>
    </location>
</feature>
<feature type="site" description="Interaction with the host cell wall" evidence="2 4">
    <location>
        <position position="29"/>
    </location>
</feature>
<feature type="site" description="Interaction with the host cell wall" evidence="4">
    <location>
        <position position="30"/>
    </location>
</feature>
<feature type="site" description="Interaction with the host cell wall" evidence="4">
    <location>
        <position position="37"/>
    </location>
</feature>
<feature type="site" description="Interaction with the host cell wall" evidence="2">
    <location>
        <position position="60"/>
    </location>
</feature>
<feature type="site" description="Interaction with the host cell wall" evidence="2 4">
    <location>
        <position position="67"/>
    </location>
</feature>
<feature type="mutagenesis site" description="Complete loss of PlyC holoenzyme formation." evidence="2">
    <original>I</original>
    <variation>A</variation>
    <variation>D</variation>
    <location>
        <position position="4"/>
    </location>
</feature>
<feature type="mutagenesis site" description="190-fold decrease in enzymatic activity of PlyC holoenzyme." evidence="4">
    <original>Y</original>
    <variation>H</variation>
    <location>
        <position position="29"/>
    </location>
</feature>
<feature type="mutagenesis site" description="Complete loss of enzymatic activity of PlyC holoenzyme." evidence="4">
    <original>E</original>
    <variation>A</variation>
    <variation>G</variation>
    <variation>H</variation>
    <variation>N</variation>
    <variation>P</variation>
    <variation>V</variation>
    <location>
        <position position="37"/>
    </location>
</feature>
<feature type="mutagenesis site" description="No effect on enzymatic activity of PlyC holoenzyme." evidence="4">
    <original>E</original>
    <variation>D</variation>
    <location>
        <position position="37"/>
    </location>
</feature>
<feature type="mutagenesis site" description="No effect on catalytic activity of PlyC holoenzyme." evidence="2">
    <original>Q</original>
    <variation>A</variation>
    <location>
        <position position="47"/>
    </location>
</feature>
<feature type="mutagenesis site" description="90% loss of cell-wall binding and enzymatic activity of PlyC holoenzyme." evidence="2">
    <original>K</original>
    <variation>E</variation>
    <location>
        <position position="60"/>
    </location>
</feature>
<feature type="mutagenesis site" description="Complete loss of enzymatic activity of PlyC holoenzyme." evidence="4">
    <original>K</original>
    <variation>H</variation>
    <location>
        <position position="60"/>
    </location>
</feature>
<feature type="mutagenesis site" description="Complete loss cell-wall binding and of enzymatic activity of PlyC holoenzyme." evidence="2">
    <original>R</original>
    <variation>E</variation>
    <location>
        <position position="67"/>
    </location>
</feature>
<feature type="mutagenesis site" description="3790-fold decrease in enzymatic activity of PlyC holoenzyme." evidence="4">
    <original>R</original>
    <variation>K</variation>
    <location>
        <position position="67"/>
    </location>
</feature>
<feature type="strand" evidence="17">
    <location>
        <begin position="6"/>
        <end position="9"/>
    </location>
</feature>
<feature type="strand" evidence="16">
    <location>
        <begin position="16"/>
        <end position="20"/>
    </location>
</feature>
<feature type="strand" evidence="16">
    <location>
        <begin position="23"/>
        <end position="25"/>
    </location>
</feature>
<feature type="strand" evidence="16">
    <location>
        <begin position="29"/>
        <end position="33"/>
    </location>
</feature>
<feature type="strand" evidence="16">
    <location>
        <begin position="36"/>
        <end position="40"/>
    </location>
</feature>
<feature type="helix" evidence="16">
    <location>
        <begin position="43"/>
        <end position="50"/>
    </location>
</feature>
<feature type="strand" evidence="16">
    <location>
        <begin position="55"/>
        <end position="57"/>
    </location>
</feature>
<feature type="helix" evidence="16">
    <location>
        <begin position="60"/>
        <end position="62"/>
    </location>
</feature>
<feature type="helix" evidence="16">
    <location>
        <begin position="63"/>
        <end position="70"/>
    </location>
</feature>
<keyword id="KW-0002">3D-structure</keyword>
<keyword id="KW-0929">Antimicrobial</keyword>
<keyword id="KW-0204">Cytolysis</keyword>
<keyword id="KW-0903">Direct protein sequencing</keyword>
<keyword id="KW-0578">Host cell lysis by virus</keyword>
<keyword id="KW-1185">Reference proteome</keyword>
<keyword id="KW-1188">Viral release from host cell</keyword>
<sequence>MSKINVNVENVSGVQGFLFHTDGKESYGYRAFINGVEIGIKDIETVQGFQQIIPSINISKSDVEAIRKAMKK</sequence>
<evidence type="ECO:0000269" key="1">
    <source>
    </source>
</evidence>
<evidence type="ECO:0000269" key="2">
    <source>
    </source>
</evidence>
<evidence type="ECO:0000269" key="3">
    <source>
    </source>
</evidence>
<evidence type="ECO:0000269" key="4">
    <source>
    </source>
</evidence>
<evidence type="ECO:0000269" key="5">
    <source>
    </source>
</evidence>
<evidence type="ECO:0000303" key="6">
    <source>
    </source>
</evidence>
<evidence type="ECO:0000305" key="7"/>
<evidence type="ECO:0000305" key="8">
    <source>
    </source>
</evidence>
<evidence type="ECO:0000305" key="9">
    <source>
    </source>
</evidence>
<evidence type="ECO:0007744" key="10">
    <source>
        <dbReference type="PDB" id="4F87"/>
    </source>
</evidence>
<evidence type="ECO:0007744" key="11">
    <source>
        <dbReference type="PDB" id="4F88"/>
    </source>
</evidence>
<evidence type="ECO:0007744" key="12">
    <source>
        <dbReference type="PDB" id="4ZRZ"/>
    </source>
</evidence>
<evidence type="ECO:0007744" key="13">
    <source>
        <dbReference type="PDB" id="7KWT"/>
    </source>
</evidence>
<evidence type="ECO:0007744" key="14">
    <source>
        <dbReference type="PDB" id="7KWW"/>
    </source>
</evidence>
<evidence type="ECO:0007744" key="15">
    <source>
        <dbReference type="PDB" id="7KWY"/>
    </source>
</evidence>
<evidence type="ECO:0007829" key="16">
    <source>
        <dbReference type="PDB" id="4F87"/>
    </source>
</evidence>
<evidence type="ECO:0007829" key="17">
    <source>
        <dbReference type="PDB" id="4F88"/>
    </source>
</evidence>
<reference key="1">
    <citation type="journal article" date="2003" name="J. Bacteriol.">
        <title>Genomic sequence of C1, the first streptococcal phage.</title>
        <authorList>
            <person name="Nelson D."/>
            <person name="Schuch R."/>
            <person name="Zhu S."/>
            <person name="Tscherne D.M."/>
            <person name="Fischetti V.A."/>
        </authorList>
    </citation>
    <scope>NUCLEOTIDE SEQUENCE [GENOMIC DNA]</scope>
</reference>
<reference key="2">
    <citation type="journal article" date="2006" name="Proc. Natl. Acad. Sci. U.S.A.">
        <title>PlyC: a multimeric bacteriophage lysin.</title>
        <authorList>
            <person name="Nelson D."/>
            <person name="Schuch R."/>
            <person name="Chahales P."/>
            <person name="Zhu S."/>
            <person name="Fischetti V.A."/>
        </authorList>
    </citation>
    <scope>NUCLEOTIDE SEQUENCE [LARGE SCALE GENOMIC DNA]</scope>
    <scope>PROTEIN SEQUENCE OF 1-11</scope>
    <scope>FUNCTION</scope>
    <scope>SUBUNIT</scope>
</reference>
<reference key="3">
    <citation type="journal article" date="2021" name="Biochem. J.">
        <title>Molecular basis for recognition of the Group A Carbohydrate backbone by the PlyC streptococcal bacteriophage endolysin.</title>
        <authorList>
            <person name="King H."/>
            <person name="Ajay Castro S."/>
            <person name="Pohane A.A."/>
            <person name="Scholte C.M."/>
            <person name="Fischetti V.A."/>
            <person name="Korotkova N."/>
            <person name="Nelson D.C."/>
            <person name="Dorfmueller H.C."/>
        </authorList>
    </citation>
    <scope>FUNCTION</scope>
</reference>
<reference evidence="10 11" key="4">
    <citation type="journal article" date="2012" name="Proc. Natl. Acad. Sci. U.S.A.">
        <title>X-ray crystal structure of the streptococcal specific phage lysin PlyC.</title>
        <authorList>
            <person name="McGowan S."/>
            <person name="Buckle A.M."/>
            <person name="Mitchell M.S."/>
            <person name="Hoopes J.T."/>
            <person name="Gallagher D.T."/>
            <person name="Heselpoth R.D."/>
            <person name="Shen Y."/>
            <person name="Reboul C.F."/>
            <person name="Law R.H."/>
            <person name="Fischetti V.A."/>
            <person name="Whisstock J.C."/>
            <person name="Nelson D.C."/>
        </authorList>
    </citation>
    <scope>X-RAY CRYSTALLOGRAPHY (1.40 ANGSTROMS)</scope>
    <scope>SUBUNIT</scope>
    <scope>MUTAGENESIS OF ILE-4; TYR-29; GLN-47; LYS-60 AND ARG-67</scope>
    <scope>IDENTIFICATION IN A COMPLEX WITH PLYCA</scope>
</reference>
<reference evidence="12" key="5">
    <citation type="journal article" date="2016" name="Elife">
        <title>A bacteriophage endolysin that eliminates intracellular streptococci.</title>
        <authorList>
            <person name="Shen Y."/>
            <person name="Barros M."/>
            <person name="Vennemann T."/>
            <person name="Gallagher D.T."/>
            <person name="Yin Y."/>
            <person name="Linden S.B."/>
            <person name="Heselpoth R.D."/>
            <person name="Spencer D.J."/>
            <person name="Donovan D.M."/>
            <person name="Moult J."/>
            <person name="Fischetti V.A."/>
            <person name="Heinrich F."/>
            <person name="Losche M."/>
            <person name="Nelson D.C."/>
        </authorList>
    </citation>
    <scope>X-RAY CRYSTALLOGRAPHY (1.72 ANGSTROMS) OF 2-72</scope>
</reference>
<reference evidence="13 14 15" key="6">
    <citation type="journal article" date="2021" name="Mol. Microbiol.">
        <title>High avidity drives the interaction between the streptococcal C1 phage endolysin, PlyC, with the cell surface carbohydrates of Group A Streptococcus.</title>
        <authorList>
            <person name="Broendum S.S."/>
            <person name="Williams D.E."/>
            <person name="Hayes B.K."/>
            <person name="Kraus F."/>
            <person name="Fodor J."/>
            <person name="Clifton B.E."/>
            <person name="Geert Volbeda A."/>
            <person name="Codee J.D.C."/>
            <person name="Riley B.T."/>
            <person name="Drinkwater N."/>
            <person name="Farrow K.A."/>
            <person name="Tsyganov K."/>
            <person name="Heselpoth R.D."/>
            <person name="Nelson D.C."/>
            <person name="Jackson C.J."/>
            <person name="Buckle A.M."/>
            <person name="McGowan S."/>
        </authorList>
    </citation>
    <scope>X-RAY CRYSTALLOGRAPHY (1.70 ANGSTROMS) OF 1-72 IN COMPLEX WITH (4S)-2-METHYL-2,4-PENTANEDIOL</scope>
    <scope>MUTAGENESIS OF TYR-29; GLU-37; LYS-60 AND ARG-67</scope>
    <scope>FUNCTION</scope>
</reference>
<comment type="function">
    <text evidence="1 4 5 8 9">Component of the endolysin PlyC that degrades the host peptidoglycans and participates with the holin protein in the sequential events which lead to the programmed host cell lysis releasing the mature viral particles (Probable). Once the holin has permeabilized the host cell membrane, the endolysin can reach the periplasm and breaking down the peptidoglycan layer (Probable). The small subunit PlyCB is responsible for the specific binding of the endolysin to the host cell-wall, probably to the rhamnose of group A streptococcal carbohydrates (PubMed:16818874, PubMed:33756056, PubMed:34096588). PlyCB is essential for lytic activity, cell wall binding is a prerequisite for cell lysis (PubMed:16818874).</text>
</comment>
<comment type="subunit">
    <text evidence="1 2">Homooctamer (PubMed:16818874, PubMed:22807482). Part of the PlyC holoenzyme, which is composed of 1 PLYCA and 8 PLYCB assembled into a ring structure (PubMed:16818874, PubMed:22807482).</text>
</comment>
<comment type="interaction">
    <interactant intactId="EBI-15590349">
        <id>Q7Y3F3</id>
    </interactant>
    <interactant intactId="EBI-15590339">
        <id>Q7Y3F1</id>
        <label>orf11</label>
    </interactant>
    <organismsDiffer>false</organismsDiffer>
    <experiments>4</experiments>
</comment>
<comment type="interaction">
    <interactant intactId="EBI-15590349">
        <id>Q7Y3F3</id>
    </interactant>
    <interactant intactId="EBI-15590349">
        <id>Q7Y3F3</id>
        <label>orf9dod</label>
    </interactant>
    <organismsDiffer>false</organismsDiffer>
    <experiments>2</experiments>
</comment>
<comment type="miscellaneous">
    <text evidence="1">Part of plyC operon, which contains plyCA, lil and plyCB genes.</text>
</comment>
<comment type="miscellaneous">
    <text evidence="3">Seems to be involved in the internalization by mammalian cells infected by Streptococcus pyogenes.</text>
</comment>
<name>PLYCB_BPSC1</name>
<dbReference type="EMBL" id="AY212251">
    <property type="protein sequence ID" value="AAP42308.1"/>
    <property type="molecule type" value="Genomic_DNA"/>
</dbReference>
<dbReference type="PDB" id="4F87">
    <property type="method" value="X-ray"/>
    <property type="resolution" value="1.40 A"/>
    <property type="chains" value="A/B/C/D=1-72"/>
</dbReference>
<dbReference type="PDB" id="4F88">
    <property type="method" value="X-ray"/>
    <property type="resolution" value="3.30 A"/>
    <property type="chains" value="A/B/C/D/E/F/G/H/I/J/K/L/M/N/O/P=1-72"/>
</dbReference>
<dbReference type="PDB" id="4ZRZ">
    <property type="method" value="X-ray"/>
    <property type="resolution" value="1.72 A"/>
    <property type="chains" value="A/B=2-72"/>
</dbReference>
<dbReference type="PDB" id="7KWT">
    <property type="method" value="X-ray"/>
    <property type="resolution" value="1.79 A"/>
    <property type="chains" value="A/B=2-72"/>
</dbReference>
<dbReference type="PDB" id="7KWW">
    <property type="method" value="X-ray"/>
    <property type="resolution" value="1.80 A"/>
    <property type="chains" value="A/B=1-72"/>
</dbReference>
<dbReference type="PDB" id="7KWY">
    <property type="method" value="X-ray"/>
    <property type="resolution" value="1.70 A"/>
    <property type="chains" value="A/B=2-72"/>
</dbReference>
<dbReference type="PDBsum" id="4F87"/>
<dbReference type="PDBsum" id="4F88"/>
<dbReference type="PDBsum" id="4ZRZ"/>
<dbReference type="PDBsum" id="7KWT"/>
<dbReference type="PDBsum" id="7KWW"/>
<dbReference type="PDBsum" id="7KWY"/>
<dbReference type="SMR" id="Q7Y3F3"/>
<dbReference type="DIP" id="DIP-60065N"/>
<dbReference type="IntAct" id="Q7Y3F3">
    <property type="interactions" value="1"/>
</dbReference>
<dbReference type="KEGG" id="vg:1489934"/>
<dbReference type="EvolutionaryTrace" id="Q7Y3F3"/>
<dbReference type="Proteomes" id="UP000001773">
    <property type="component" value="Genome"/>
</dbReference>
<dbReference type="GO" id="GO:0042802">
    <property type="term" value="F:identical protein binding"/>
    <property type="evidence" value="ECO:0000353"/>
    <property type="project" value="IntAct"/>
</dbReference>
<dbReference type="GO" id="GO:0031640">
    <property type="term" value="P:killing of cells of another organism"/>
    <property type="evidence" value="ECO:0007669"/>
    <property type="project" value="UniProtKB-KW"/>
</dbReference>
<dbReference type="Gene3D" id="3.30.720.190">
    <property type="match status" value="1"/>
</dbReference>
<dbReference type="InterPro" id="IPR048849">
    <property type="entry name" value="Endolysin_PlyC"/>
</dbReference>
<dbReference type="InterPro" id="IPR053769">
    <property type="entry name" value="PlyC_sf"/>
</dbReference>
<dbReference type="Pfam" id="PF20821">
    <property type="entry name" value="C1_PlyCB"/>
    <property type="match status" value="1"/>
</dbReference>
<proteinExistence type="evidence at protein level"/>
<protein>
    <recommendedName>
        <fullName evidence="7">Endolysin PlyC, small cell-wall binding subunit</fullName>
        <shortName evidence="6">PlyCB</shortName>
    </recommendedName>
</protein>
<accession>Q7Y3F3</accession>
<gene>
    <name type="primary">orf9dod</name>
</gene>
<organism>
    <name type="scientific">Streptococcus phage C1</name>
    <dbReference type="NCBI Taxonomy" id="2907838"/>
    <lineage>
        <taxon>Viruses</taxon>
        <taxon>Duplodnaviria</taxon>
        <taxon>Heunggongvirae</taxon>
        <taxon>Uroviricota</taxon>
        <taxon>Caudoviricetes</taxon>
        <taxon>Rountreeviridae</taxon>
        <taxon>Fischettivirus</taxon>
        <taxon>Fischettivirus C1</taxon>
    </lineage>
</organism>